<keyword id="KW-0997">Cell inner membrane</keyword>
<keyword id="KW-1003">Cell membrane</keyword>
<keyword id="KW-0472">Membrane</keyword>
<keyword id="KW-0653">Protein transport</keyword>
<keyword id="KW-0811">Translocation</keyword>
<keyword id="KW-0812">Transmembrane</keyword>
<keyword id="KW-1133">Transmembrane helix</keyword>
<keyword id="KW-0813">Transport</keyword>
<protein>
    <recommendedName>
        <fullName evidence="1">Sec-independent protein translocase protein TatB</fullName>
    </recommendedName>
</protein>
<name>TATB_SHEPC</name>
<feature type="chain" id="PRO_1000044464" description="Sec-independent protein translocase protein TatB">
    <location>
        <begin position="1"/>
        <end position="158"/>
    </location>
</feature>
<feature type="transmembrane region" description="Helical" evidence="1">
    <location>
        <begin position="2"/>
        <end position="22"/>
    </location>
</feature>
<feature type="region of interest" description="Disordered" evidence="2">
    <location>
        <begin position="86"/>
        <end position="158"/>
    </location>
</feature>
<feature type="compositionally biased region" description="Polar residues" evidence="2">
    <location>
        <begin position="88"/>
        <end position="107"/>
    </location>
</feature>
<feature type="compositionally biased region" description="Polar residues" evidence="2">
    <location>
        <begin position="113"/>
        <end position="136"/>
    </location>
</feature>
<feature type="compositionally biased region" description="Polar residues" evidence="2">
    <location>
        <begin position="143"/>
        <end position="158"/>
    </location>
</feature>
<evidence type="ECO:0000255" key="1">
    <source>
        <dbReference type="HAMAP-Rule" id="MF_00237"/>
    </source>
</evidence>
<evidence type="ECO:0000256" key="2">
    <source>
        <dbReference type="SAM" id="MobiDB-lite"/>
    </source>
</evidence>
<comment type="function">
    <text evidence="1">Part of the twin-arginine translocation (Tat) system that transports large folded proteins containing a characteristic twin-arginine motif in their signal peptide across membranes. Together with TatC, TatB is part of a receptor directly interacting with Tat signal peptides. TatB may form an oligomeric binding site that transiently accommodates folded Tat precursor proteins before their translocation.</text>
</comment>
<comment type="subunit">
    <text evidence="1">The Tat system comprises two distinct complexes: a TatABC complex, containing multiple copies of TatA, TatB and TatC subunits, and a separate TatA complex, containing only TatA subunits. Substrates initially bind to the TatABC complex, which probably triggers association of the separate TatA complex to form the active translocon.</text>
</comment>
<comment type="subcellular location">
    <subcellularLocation>
        <location evidence="1">Cell inner membrane</location>
        <topology evidence="1">Single-pass membrane protein</topology>
    </subcellularLocation>
</comment>
<comment type="similarity">
    <text evidence="1">Belongs to the TatB family.</text>
</comment>
<accession>A4Y2Q1</accession>
<organism>
    <name type="scientific">Shewanella putrefaciens (strain CN-32 / ATCC BAA-453)</name>
    <dbReference type="NCBI Taxonomy" id="319224"/>
    <lineage>
        <taxon>Bacteria</taxon>
        <taxon>Pseudomonadati</taxon>
        <taxon>Pseudomonadota</taxon>
        <taxon>Gammaproteobacteria</taxon>
        <taxon>Alteromonadales</taxon>
        <taxon>Shewanellaceae</taxon>
        <taxon>Shewanella</taxon>
    </lineage>
</organism>
<reference key="1">
    <citation type="submission" date="2007-04" db="EMBL/GenBank/DDBJ databases">
        <title>Complete sequence of Shewanella putrefaciens CN-32.</title>
        <authorList>
            <consortium name="US DOE Joint Genome Institute"/>
            <person name="Copeland A."/>
            <person name="Lucas S."/>
            <person name="Lapidus A."/>
            <person name="Barry K."/>
            <person name="Detter J.C."/>
            <person name="Glavina del Rio T."/>
            <person name="Hammon N."/>
            <person name="Israni S."/>
            <person name="Dalin E."/>
            <person name="Tice H."/>
            <person name="Pitluck S."/>
            <person name="Chain P."/>
            <person name="Malfatti S."/>
            <person name="Shin M."/>
            <person name="Vergez L."/>
            <person name="Schmutz J."/>
            <person name="Larimer F."/>
            <person name="Land M."/>
            <person name="Hauser L."/>
            <person name="Kyrpides N."/>
            <person name="Mikhailova N."/>
            <person name="Romine M.F."/>
            <person name="Fredrickson J."/>
            <person name="Tiedje J."/>
            <person name="Richardson P."/>
        </authorList>
    </citation>
    <scope>NUCLEOTIDE SEQUENCE [LARGE SCALE GENOMIC DNA]</scope>
    <source>
        <strain>CN-32 / ATCC BAA-453</strain>
    </source>
</reference>
<gene>
    <name evidence="1" type="primary">tatB</name>
    <name type="ordered locus">Sputcn32_0502</name>
</gene>
<sequence length="158" mass="17047">MFDGIGFMELLLIGVLGLVVLGPERLPVAVRSVTGWIRAMKRMANSVKEELEQELKIEQLHADLKKAESKGLSNLSPELKESIEQLKQAAQSVNRPYQVQDSSSQGTAAPDNQIHSPAQVSQTNPTTPLETSQHLTSPAAHNEPSQGVDTSSNPKANG</sequence>
<proteinExistence type="inferred from homology"/>
<dbReference type="EMBL" id="CP000681">
    <property type="protein sequence ID" value="ABP74234.1"/>
    <property type="molecule type" value="Genomic_DNA"/>
</dbReference>
<dbReference type="SMR" id="A4Y2Q1"/>
<dbReference type="STRING" id="319224.Sputcn32_0502"/>
<dbReference type="KEGG" id="spc:Sputcn32_0502"/>
<dbReference type="eggNOG" id="COG1826">
    <property type="taxonomic scope" value="Bacteria"/>
</dbReference>
<dbReference type="HOGENOM" id="CLU_086034_1_0_6"/>
<dbReference type="GO" id="GO:0033281">
    <property type="term" value="C:TAT protein transport complex"/>
    <property type="evidence" value="ECO:0007669"/>
    <property type="project" value="UniProtKB-UniRule"/>
</dbReference>
<dbReference type="GO" id="GO:0008320">
    <property type="term" value="F:protein transmembrane transporter activity"/>
    <property type="evidence" value="ECO:0007669"/>
    <property type="project" value="UniProtKB-UniRule"/>
</dbReference>
<dbReference type="GO" id="GO:0043953">
    <property type="term" value="P:protein transport by the Tat complex"/>
    <property type="evidence" value="ECO:0007669"/>
    <property type="project" value="UniProtKB-UniRule"/>
</dbReference>
<dbReference type="Gene3D" id="1.20.5.3310">
    <property type="match status" value="1"/>
</dbReference>
<dbReference type="HAMAP" id="MF_00237">
    <property type="entry name" value="TatB"/>
    <property type="match status" value="1"/>
</dbReference>
<dbReference type="InterPro" id="IPR003369">
    <property type="entry name" value="TatA/B/E"/>
</dbReference>
<dbReference type="InterPro" id="IPR018448">
    <property type="entry name" value="TatB"/>
</dbReference>
<dbReference type="NCBIfam" id="TIGR01410">
    <property type="entry name" value="tatB"/>
    <property type="match status" value="1"/>
</dbReference>
<dbReference type="PANTHER" id="PTHR33162">
    <property type="entry name" value="SEC-INDEPENDENT PROTEIN TRANSLOCASE PROTEIN TATA, CHLOROPLASTIC"/>
    <property type="match status" value="1"/>
</dbReference>
<dbReference type="PANTHER" id="PTHR33162:SF1">
    <property type="entry name" value="SEC-INDEPENDENT PROTEIN TRANSLOCASE PROTEIN TATA, CHLOROPLASTIC"/>
    <property type="match status" value="1"/>
</dbReference>
<dbReference type="Pfam" id="PF02416">
    <property type="entry name" value="TatA_B_E"/>
    <property type="match status" value="1"/>
</dbReference>
<dbReference type="PRINTS" id="PR01506">
    <property type="entry name" value="TATBPROTEIN"/>
</dbReference>